<name>NTA_CHIGU</name>
<protein>
    <recommendedName>
        <fullName>Jingzhaotoxin F7-15.33</fullName>
    </recommendedName>
    <alternativeName>
        <fullName>Peptide F7-15.33</fullName>
    </alternativeName>
</protein>
<organism>
    <name type="scientific">Chilobrachys guangxiensis</name>
    <name type="common">Chinese earth tiger tarantula</name>
    <name type="synonym">Chilobrachys jingzhao</name>
    <dbReference type="NCBI Taxonomy" id="278060"/>
    <lineage>
        <taxon>Eukaryota</taxon>
        <taxon>Metazoa</taxon>
        <taxon>Ecdysozoa</taxon>
        <taxon>Arthropoda</taxon>
        <taxon>Chelicerata</taxon>
        <taxon>Arachnida</taxon>
        <taxon>Araneae</taxon>
        <taxon>Mygalomorphae</taxon>
        <taxon>Theraphosidae</taxon>
        <taxon>Chilobrachys</taxon>
    </lineage>
</organism>
<comment type="function">
    <text>Probable ion channel inhibitor.</text>
</comment>
<comment type="subcellular location">
    <subcellularLocation>
        <location>Secreted</location>
    </subcellularLocation>
</comment>
<comment type="tissue specificity">
    <text>Expressed by the venom gland.</text>
</comment>
<comment type="domain">
    <text evidence="1">The presence of a 'disulfide through disulfide knot' structurally defines this protein as a knottin.</text>
</comment>
<comment type="similarity">
    <text>Belongs to the neurotoxin 10 (Hwtx-1) family.</text>
</comment>
<accession>P0CH55</accession>
<feature type="peptide" id="PRO_0000398564" description="Jingzhaotoxin F7-15.33">
    <location>
        <begin position="1"/>
        <end position="31"/>
    </location>
</feature>
<feature type="disulfide bond" evidence="1">
    <location>
        <begin position="2"/>
        <end position="16"/>
    </location>
</feature>
<feature type="disulfide bond" evidence="1">
    <location>
        <begin position="9"/>
        <end position="21"/>
    </location>
</feature>
<feature type="disulfide bond" evidence="1">
    <location>
        <begin position="15"/>
        <end position="28"/>
    </location>
</feature>
<proteinExistence type="evidence at protein level"/>
<dbReference type="SMR" id="P0CH55"/>
<dbReference type="GO" id="GO:0005576">
    <property type="term" value="C:extracellular region"/>
    <property type="evidence" value="ECO:0007669"/>
    <property type="project" value="UniProtKB-SubCell"/>
</dbReference>
<dbReference type="GO" id="GO:0099106">
    <property type="term" value="F:ion channel regulator activity"/>
    <property type="evidence" value="ECO:0007669"/>
    <property type="project" value="UniProtKB-KW"/>
</dbReference>
<dbReference type="GO" id="GO:0090729">
    <property type="term" value="F:toxin activity"/>
    <property type="evidence" value="ECO:0007669"/>
    <property type="project" value="UniProtKB-KW"/>
</dbReference>
<reference key="1">
    <citation type="journal article" date="2007" name="Proteomics">
        <title>Proteomic and peptidomic analysis of the venom from Chinese tarantula Chilobrachys jingzhao.</title>
        <authorList>
            <person name="Liao Z."/>
            <person name="Cao J."/>
            <person name="Li S."/>
            <person name="Yan X."/>
            <person name="Hu W."/>
            <person name="He Q."/>
            <person name="Chen J."/>
            <person name="Tang J."/>
            <person name="Xie J."/>
            <person name="Liang S."/>
        </authorList>
    </citation>
    <scope>PROTEIN SEQUENCE</scope>
    <scope>IDENTIFICATION BY MASS SPECTROMETRY</scope>
    <source>
        <tissue>Venom</tissue>
    </source>
</reference>
<sequence length="31" mass="3712">LCSREGEFCYKLRKCCAGFYCKAFVLHCYRN</sequence>
<keyword id="KW-0903">Direct protein sequencing</keyword>
<keyword id="KW-1015">Disulfide bond</keyword>
<keyword id="KW-0872">Ion channel impairing toxin</keyword>
<keyword id="KW-0960">Knottin</keyword>
<keyword id="KW-0964">Secreted</keyword>
<keyword id="KW-0800">Toxin</keyword>
<evidence type="ECO:0000250" key="1"/>